<dbReference type="EC" id="3.1.21.4"/>
<dbReference type="EMBL" id="AE007317">
    <property type="protein sequence ID" value="AAL00468.1"/>
    <property type="molecule type" value="Genomic_DNA"/>
</dbReference>
<dbReference type="PIR" id="G98079">
    <property type="entry name" value="G98079"/>
</dbReference>
<dbReference type="RefSeq" id="NP_359257.1">
    <property type="nucleotide sequence ID" value="NC_003098.1"/>
</dbReference>
<dbReference type="RefSeq" id="WP_000418960.1">
    <property type="nucleotide sequence ID" value="NC_003098.1"/>
</dbReference>
<dbReference type="PDB" id="4ESJ">
    <property type="method" value="X-ray"/>
    <property type="resolution" value="2.05 A"/>
    <property type="chains" value="A/B=1-254"/>
</dbReference>
<dbReference type="PDBsum" id="4ESJ"/>
<dbReference type="SMR" id="P0A460"/>
<dbReference type="STRING" id="171101.spr1665"/>
<dbReference type="REBASE" id="5630">
    <property type="entry name" value="SpnRORF1665P"/>
</dbReference>
<dbReference type="KEGG" id="spr:spr1665"/>
<dbReference type="PATRIC" id="fig|171101.6.peg.1799"/>
<dbReference type="eggNOG" id="ENOG502Z8N2">
    <property type="taxonomic scope" value="Bacteria"/>
</dbReference>
<dbReference type="HOGENOM" id="CLU_095681_0_0_9"/>
<dbReference type="EvolutionaryTrace" id="P0A460"/>
<dbReference type="PRO" id="PR:P0A460"/>
<dbReference type="Proteomes" id="UP000000586">
    <property type="component" value="Chromosome"/>
</dbReference>
<dbReference type="GO" id="GO:0009036">
    <property type="term" value="F:type II site-specific deoxyribonuclease activity"/>
    <property type="evidence" value="ECO:0007669"/>
    <property type="project" value="UniProtKB-EC"/>
</dbReference>
<dbReference type="GO" id="GO:0009307">
    <property type="term" value="P:DNA restriction-modification system"/>
    <property type="evidence" value="ECO:0007669"/>
    <property type="project" value="UniProtKB-KW"/>
</dbReference>
<dbReference type="CDD" id="cd22319">
    <property type="entry name" value="DpnI-like"/>
    <property type="match status" value="1"/>
</dbReference>
<dbReference type="Gene3D" id="3.40.210.30">
    <property type="entry name" value="Dam replacing family, catalytic PD-(D/E)XK domain"/>
    <property type="match status" value="1"/>
</dbReference>
<dbReference type="Gene3D" id="1.10.10.10">
    <property type="entry name" value="Winged helix-like DNA-binding domain superfamily/Winged helix DNA-binding domain"/>
    <property type="match status" value="1"/>
</dbReference>
<dbReference type="InterPro" id="IPR010324">
    <property type="entry name" value="DRP"/>
</dbReference>
<dbReference type="InterPro" id="IPR041368">
    <property type="entry name" value="DRP_C"/>
</dbReference>
<dbReference type="InterPro" id="IPR043025">
    <property type="entry name" value="DRP_PD-(D/E)XK_dom"/>
</dbReference>
<dbReference type="InterPro" id="IPR036388">
    <property type="entry name" value="WH-like_DNA-bd_sf"/>
</dbReference>
<dbReference type="Pfam" id="PF06044">
    <property type="entry name" value="DpnI"/>
    <property type="match status" value="1"/>
</dbReference>
<dbReference type="Pfam" id="PF17726">
    <property type="entry name" value="DpnI_C"/>
    <property type="match status" value="1"/>
</dbReference>
<comment type="function">
    <text evidence="1 2">An M and P subtype restriction enzyme that recognizes the double-stranded and methylated sequence 5'-G(Me)ATC-3' and cleaves after A-2.</text>
</comment>
<comment type="catalytic activity">
    <reaction evidence="1">
        <text>Endonucleolytic cleavage of DNA to give specific double-stranded fragments with terminal 5'-phosphates.</text>
        <dbReference type="EC" id="3.1.21.4"/>
    </reaction>
</comment>
<comment type="similarity">
    <text evidence="3">Belongs to the DpnI type II restriction endonuclease family.</text>
</comment>
<accession>P0A460</accession>
<accession>P09356</accession>
<feature type="chain" id="PRO_0000077301" description="Type II Methyl-directed restriction enzyme DpnI">
    <location>
        <begin position="1"/>
        <end position="254"/>
    </location>
</feature>
<feature type="helix" evidence="4">
    <location>
        <begin position="7"/>
        <end position="12"/>
    </location>
</feature>
<feature type="turn" evidence="4">
    <location>
        <begin position="13"/>
        <end position="15"/>
    </location>
</feature>
<feature type="helix" evidence="4">
    <location>
        <begin position="19"/>
        <end position="31"/>
    </location>
</feature>
<feature type="turn" evidence="4">
    <location>
        <begin position="35"/>
        <end position="37"/>
    </location>
</feature>
<feature type="strand" evidence="4">
    <location>
        <begin position="53"/>
        <end position="55"/>
    </location>
</feature>
<feature type="turn" evidence="4">
    <location>
        <begin position="57"/>
        <end position="59"/>
    </location>
</feature>
<feature type="strand" evidence="4">
    <location>
        <begin position="62"/>
        <end position="71"/>
    </location>
</feature>
<feature type="strand" evidence="4">
    <location>
        <begin position="74"/>
        <end position="80"/>
    </location>
</feature>
<feature type="helix" evidence="4">
    <location>
        <begin position="81"/>
        <end position="89"/>
    </location>
</feature>
<feature type="strand" evidence="4">
    <location>
        <begin position="95"/>
        <end position="101"/>
    </location>
</feature>
<feature type="strand" evidence="4">
    <location>
        <begin position="105"/>
        <end position="113"/>
    </location>
</feature>
<feature type="helix" evidence="4">
    <location>
        <begin position="115"/>
        <end position="117"/>
    </location>
</feature>
<feature type="helix" evidence="4">
    <location>
        <begin position="120"/>
        <end position="122"/>
    </location>
</feature>
<feature type="strand" evidence="4">
    <location>
        <begin position="123"/>
        <end position="129"/>
    </location>
</feature>
<feature type="strand" evidence="4">
    <location>
        <begin position="138"/>
        <end position="144"/>
    </location>
</feature>
<feature type="helix" evidence="4">
    <location>
        <begin position="145"/>
        <end position="147"/>
    </location>
</feature>
<feature type="helix" evidence="4">
    <location>
        <begin position="150"/>
        <end position="152"/>
    </location>
</feature>
<feature type="strand" evidence="4">
    <location>
        <begin position="154"/>
        <end position="158"/>
    </location>
</feature>
<feature type="helix" evidence="4">
    <location>
        <begin position="165"/>
        <end position="174"/>
    </location>
</feature>
<feature type="helix" evidence="4">
    <location>
        <begin position="175"/>
        <end position="180"/>
    </location>
</feature>
<feature type="helix" evidence="4">
    <location>
        <begin position="183"/>
        <end position="198"/>
    </location>
</feature>
<feature type="strand" evidence="4">
    <location>
        <begin position="201"/>
        <end position="205"/>
    </location>
</feature>
<feature type="helix" evidence="4">
    <location>
        <begin position="206"/>
        <end position="210"/>
    </location>
</feature>
<feature type="helix" evidence="4">
    <location>
        <begin position="213"/>
        <end position="219"/>
    </location>
</feature>
<feature type="helix" evidence="4">
    <location>
        <begin position="226"/>
        <end position="239"/>
    </location>
</feature>
<feature type="strand" evidence="4">
    <location>
        <begin position="242"/>
        <end position="245"/>
    </location>
</feature>
<feature type="strand" evidence="4">
    <location>
        <begin position="250"/>
        <end position="253"/>
    </location>
</feature>
<reference key="1">
    <citation type="journal article" date="2001" name="J. Bacteriol.">
        <title>Genome of the bacterium Streptococcus pneumoniae strain R6.</title>
        <authorList>
            <person name="Hoskins J."/>
            <person name="Alborn W.E. Jr."/>
            <person name="Arnold J."/>
            <person name="Blaszczak L.C."/>
            <person name="Burgett S."/>
            <person name="DeHoff B.S."/>
            <person name="Estrem S.T."/>
            <person name="Fritz L."/>
            <person name="Fu D.-J."/>
            <person name="Fuller W."/>
            <person name="Geringer C."/>
            <person name="Gilmour R."/>
            <person name="Glass J.S."/>
            <person name="Khoja H."/>
            <person name="Kraft A.R."/>
            <person name="Lagace R.E."/>
            <person name="LeBlanc D.J."/>
            <person name="Lee L.N."/>
            <person name="Lefkowitz E.J."/>
            <person name="Lu J."/>
            <person name="Matsushima P."/>
            <person name="McAhren S.M."/>
            <person name="McHenney M."/>
            <person name="McLeaster K."/>
            <person name="Mundy C.W."/>
            <person name="Nicas T.I."/>
            <person name="Norris F.H."/>
            <person name="O'Gara M."/>
            <person name="Peery R.B."/>
            <person name="Robertson G.T."/>
            <person name="Rockey P."/>
            <person name="Sun P.-M."/>
            <person name="Winkler M.E."/>
            <person name="Yang Y."/>
            <person name="Young-Bellido M."/>
            <person name="Zhao G."/>
            <person name="Zook C.A."/>
            <person name="Baltz R.H."/>
            <person name="Jaskunas S.R."/>
            <person name="Rosteck P.R. Jr."/>
            <person name="Skatrud P.L."/>
            <person name="Glass J.I."/>
        </authorList>
    </citation>
    <scope>NUCLEOTIDE SEQUENCE [LARGE SCALE GENOMIC DNA]</scope>
    <source>
        <strain>ATCC BAA-255 / R6</strain>
    </source>
</reference>
<reference key="2">
    <citation type="journal article" date="2003" name="Nucleic Acids Res.">
        <title>A nomenclature for restriction enzymes, DNA methyltransferases, homing endonucleases and their genes.</title>
        <authorList>
            <person name="Roberts R.J."/>
            <person name="Belfort M."/>
            <person name="Bestor T."/>
            <person name="Bhagwat A.S."/>
            <person name="Bickle T.A."/>
            <person name="Bitinaite J."/>
            <person name="Blumenthal R.M."/>
            <person name="Degtyarev S.K."/>
            <person name="Dryden D.T."/>
            <person name="Dybvig K."/>
            <person name="Firman K."/>
            <person name="Gromova E.S."/>
            <person name="Gumport R.I."/>
            <person name="Halford S.E."/>
            <person name="Hattman S."/>
            <person name="Heitman J."/>
            <person name="Hornby D.P."/>
            <person name="Janulaitis A."/>
            <person name="Jeltsch A."/>
            <person name="Josephsen J."/>
            <person name="Kiss A."/>
            <person name="Klaenhammer T.R."/>
            <person name="Kobayashi I."/>
            <person name="Kong H."/>
            <person name="Krueger D.H."/>
            <person name="Lacks S."/>
            <person name="Marinus M.G."/>
            <person name="Miyahara M."/>
            <person name="Morgan R.D."/>
            <person name="Murray N.E."/>
            <person name="Nagaraja V."/>
            <person name="Piekarowicz A."/>
            <person name="Pingoud A."/>
            <person name="Raleigh E."/>
            <person name="Rao D.N."/>
            <person name="Reich N."/>
            <person name="Repin V.E."/>
            <person name="Selker E.U."/>
            <person name="Shaw P.C."/>
            <person name="Stein D.C."/>
            <person name="Stoddard B.L."/>
            <person name="Szybalski W."/>
            <person name="Trautner T.A."/>
            <person name="Van Etten J.L."/>
            <person name="Vitor J.M."/>
            <person name="Wilson G.G."/>
            <person name="Xu S.Y."/>
        </authorList>
    </citation>
    <scope>NOMENCLATURE</scope>
    <scope>SUBTYPES</scope>
</reference>
<organism>
    <name type="scientific">Streptococcus pneumoniae (strain ATCC BAA-255 / R6)</name>
    <dbReference type="NCBI Taxonomy" id="171101"/>
    <lineage>
        <taxon>Bacteria</taxon>
        <taxon>Bacillati</taxon>
        <taxon>Bacillota</taxon>
        <taxon>Bacilli</taxon>
        <taxon>Lactobacillales</taxon>
        <taxon>Streptococcaceae</taxon>
        <taxon>Streptococcus</taxon>
    </lineage>
</organism>
<keyword id="KW-0002">3D-structure</keyword>
<keyword id="KW-0255">Endonuclease</keyword>
<keyword id="KW-0378">Hydrolase</keyword>
<keyword id="KW-0540">Nuclease</keyword>
<keyword id="KW-1185">Reference proteome</keyword>
<keyword id="KW-0680">Restriction system</keyword>
<name>T2D1_STRR6</name>
<gene>
    <name type="primary">dpnC</name>
    <name type="ordered locus">spr1665</name>
</gene>
<protein>
    <recommendedName>
        <fullName evidence="2">Type II Methyl-directed restriction enzyme DpnI</fullName>
        <shortName>R.DpnI</shortName>
        <ecNumber>3.1.21.4</ecNumber>
    </recommendedName>
    <alternativeName>
        <fullName>Endonuclease DpnI</fullName>
    </alternativeName>
    <alternativeName>
        <fullName>Type-2 restriction enzyme DpnI</fullName>
    </alternativeName>
</protein>
<sequence length="254" mass="29785">MELHFNLELVETYKSNSQKARILTEDWVYRQSYCPNCGNNPLNHFENNRPVADFYCNHCSEEFELKSKKGNFSSTINDGAYATMMKRVQADNNPNFFFLTYTKNFEVNNFLVLPKQFVTPKSIIQRKPLAPTARRAGWIGCNIDLSQVPSKGRIFLVQDGQVRDPEKVTKEFKQGLFLRKSSLSSRGWTIEILNCIDKIEGSEFTLEDMYRFESDLKNIFVKNNHIKEKIRQQLQILRDKEIIEFKGRGKYRKL</sequence>
<evidence type="ECO:0000250" key="1">
    <source>
        <dbReference type="UniProtKB" id="P0A459"/>
    </source>
</evidence>
<evidence type="ECO:0000303" key="2">
    <source>
    </source>
</evidence>
<evidence type="ECO:0000305" key="3"/>
<evidence type="ECO:0007829" key="4">
    <source>
        <dbReference type="PDB" id="4ESJ"/>
    </source>
</evidence>
<proteinExistence type="evidence at protein level"/>